<dbReference type="EC" id="1.7.1.13" evidence="1"/>
<dbReference type="EMBL" id="AE002098">
    <property type="protein sequence ID" value="AAF40762.1"/>
    <property type="molecule type" value="Genomic_DNA"/>
</dbReference>
<dbReference type="PIR" id="H81211">
    <property type="entry name" value="H81211"/>
</dbReference>
<dbReference type="RefSeq" id="NP_273366.1">
    <property type="nucleotide sequence ID" value="NC_003112.2"/>
</dbReference>
<dbReference type="RefSeq" id="WP_002224865.1">
    <property type="nucleotide sequence ID" value="NC_003112.2"/>
</dbReference>
<dbReference type="SMR" id="Q9K161"/>
<dbReference type="STRING" id="122586.NMB0317"/>
<dbReference type="PaxDb" id="122586-NMB0317"/>
<dbReference type="GeneID" id="86929651"/>
<dbReference type="KEGG" id="nme:NMB0317"/>
<dbReference type="PATRIC" id="fig|122586.8.peg.401"/>
<dbReference type="HOGENOM" id="CLU_102489_0_1_4"/>
<dbReference type="InParanoid" id="Q9K161"/>
<dbReference type="OrthoDB" id="9789995at2"/>
<dbReference type="UniPathway" id="UPA00392"/>
<dbReference type="Proteomes" id="UP000000425">
    <property type="component" value="Chromosome"/>
</dbReference>
<dbReference type="GO" id="GO:0005829">
    <property type="term" value="C:cytosol"/>
    <property type="evidence" value="ECO:0000318"/>
    <property type="project" value="GO_Central"/>
</dbReference>
<dbReference type="GO" id="GO:0033739">
    <property type="term" value="F:preQ1 synthase activity"/>
    <property type="evidence" value="ECO:0000318"/>
    <property type="project" value="GO_Central"/>
</dbReference>
<dbReference type="GO" id="GO:0008616">
    <property type="term" value="P:queuosine biosynthetic process"/>
    <property type="evidence" value="ECO:0000318"/>
    <property type="project" value="GO_Central"/>
</dbReference>
<dbReference type="GO" id="GO:0006400">
    <property type="term" value="P:tRNA modification"/>
    <property type="evidence" value="ECO:0007669"/>
    <property type="project" value="UniProtKB-UniRule"/>
</dbReference>
<dbReference type="Gene3D" id="3.30.1130.10">
    <property type="match status" value="1"/>
</dbReference>
<dbReference type="HAMAP" id="MF_00818">
    <property type="entry name" value="QueF_type1"/>
    <property type="match status" value="1"/>
</dbReference>
<dbReference type="InterPro" id="IPR043133">
    <property type="entry name" value="GTP-CH-I_C/QueF"/>
</dbReference>
<dbReference type="InterPro" id="IPR050084">
    <property type="entry name" value="NADPH_dep_7-cyano-7-deazaG_red"/>
</dbReference>
<dbReference type="InterPro" id="IPR029500">
    <property type="entry name" value="QueF"/>
</dbReference>
<dbReference type="InterPro" id="IPR016856">
    <property type="entry name" value="QueF_type1"/>
</dbReference>
<dbReference type="NCBIfam" id="TIGR03139">
    <property type="entry name" value="QueF-II"/>
    <property type="match status" value="1"/>
</dbReference>
<dbReference type="PANTHER" id="PTHR34354">
    <property type="entry name" value="NADPH-DEPENDENT 7-CYANO-7-DEAZAGUANINE REDUCTASE"/>
    <property type="match status" value="1"/>
</dbReference>
<dbReference type="PANTHER" id="PTHR34354:SF1">
    <property type="entry name" value="NADPH-DEPENDENT 7-CYANO-7-DEAZAGUANINE REDUCTASE"/>
    <property type="match status" value="1"/>
</dbReference>
<dbReference type="Pfam" id="PF14489">
    <property type="entry name" value="QueF"/>
    <property type="match status" value="1"/>
</dbReference>
<dbReference type="PIRSF" id="PIRSF027377">
    <property type="entry name" value="Nitrile_oxidored_QueF"/>
    <property type="match status" value="1"/>
</dbReference>
<dbReference type="SUPFAM" id="SSF55620">
    <property type="entry name" value="Tetrahydrobiopterin biosynthesis enzymes-like"/>
    <property type="match status" value="1"/>
</dbReference>
<name>QUEF_NEIMB</name>
<reference key="1">
    <citation type="journal article" date="2000" name="Science">
        <title>Complete genome sequence of Neisseria meningitidis serogroup B strain MC58.</title>
        <authorList>
            <person name="Tettelin H."/>
            <person name="Saunders N.J."/>
            <person name="Heidelberg J.F."/>
            <person name="Jeffries A.C."/>
            <person name="Nelson K.E."/>
            <person name="Eisen J.A."/>
            <person name="Ketchum K.A."/>
            <person name="Hood D.W."/>
            <person name="Peden J.F."/>
            <person name="Dodson R.J."/>
            <person name="Nelson W.C."/>
            <person name="Gwinn M.L."/>
            <person name="DeBoy R.T."/>
            <person name="Peterson J.D."/>
            <person name="Hickey E.K."/>
            <person name="Haft D.H."/>
            <person name="Salzberg S.L."/>
            <person name="White O."/>
            <person name="Fleischmann R.D."/>
            <person name="Dougherty B.A."/>
            <person name="Mason T.M."/>
            <person name="Ciecko A."/>
            <person name="Parksey D.S."/>
            <person name="Blair E."/>
            <person name="Cittone H."/>
            <person name="Clark E.B."/>
            <person name="Cotton M.D."/>
            <person name="Utterback T.R."/>
            <person name="Khouri H.M."/>
            <person name="Qin H."/>
            <person name="Vamathevan J.J."/>
            <person name="Gill J."/>
            <person name="Scarlato V."/>
            <person name="Masignani V."/>
            <person name="Pizza M."/>
            <person name="Grandi G."/>
            <person name="Sun L."/>
            <person name="Smith H.O."/>
            <person name="Fraser C.M."/>
            <person name="Moxon E.R."/>
            <person name="Rappuoli R."/>
            <person name="Venter J.C."/>
        </authorList>
    </citation>
    <scope>NUCLEOTIDE SEQUENCE [LARGE SCALE GENOMIC DNA]</scope>
    <source>
        <strain>ATCC BAA-335 / MC58</strain>
    </source>
</reference>
<protein>
    <recommendedName>
        <fullName evidence="1">NADPH-dependent 7-cyano-7-deazaguanine reductase</fullName>
        <ecNumber evidence="1">1.7.1.13</ecNumber>
    </recommendedName>
    <alternativeName>
        <fullName evidence="1">7-cyano-7-carbaguanine reductase</fullName>
    </alternativeName>
    <alternativeName>
        <fullName evidence="1">NADPH-dependent nitrile oxidoreductase</fullName>
    </alternativeName>
    <alternativeName>
        <fullName evidence="1">PreQ(0) reductase</fullName>
    </alternativeName>
</protein>
<gene>
    <name evidence="1" type="primary">queF</name>
    <name type="ordered locus">NMB0317</name>
</gene>
<keyword id="KW-0963">Cytoplasm</keyword>
<keyword id="KW-0521">NADP</keyword>
<keyword id="KW-0560">Oxidoreductase</keyword>
<keyword id="KW-0671">Queuosine biosynthesis</keyword>
<keyword id="KW-1185">Reference proteome</keyword>
<comment type="function">
    <text evidence="1">Catalyzes the NADPH-dependent reduction of 7-cyano-7-deazaguanine (preQ0) to 7-aminomethyl-7-deazaguanine (preQ1).</text>
</comment>
<comment type="catalytic activity">
    <reaction evidence="1">
        <text>7-aminomethyl-7-carbaguanine + 2 NADP(+) = 7-cyano-7-deazaguanine + 2 NADPH + 3 H(+)</text>
        <dbReference type="Rhea" id="RHEA:13409"/>
        <dbReference type="ChEBI" id="CHEBI:15378"/>
        <dbReference type="ChEBI" id="CHEBI:45075"/>
        <dbReference type="ChEBI" id="CHEBI:57783"/>
        <dbReference type="ChEBI" id="CHEBI:58349"/>
        <dbReference type="ChEBI" id="CHEBI:58703"/>
        <dbReference type="EC" id="1.7.1.13"/>
    </reaction>
</comment>
<comment type="pathway">
    <text evidence="1">tRNA modification; tRNA-queuosine biosynthesis.</text>
</comment>
<comment type="subcellular location">
    <subcellularLocation>
        <location evidence="1">Cytoplasm</location>
    </subcellularLocation>
</comment>
<comment type="similarity">
    <text evidence="1">Belongs to the GTP cyclohydrolase I family. QueF type 1 subfamily.</text>
</comment>
<sequence>MSRNNEELQGISLLGNQKTQYPTGYAPEILEAFDNKHPDNDYFVKFVCPEFTSLCPMTGQPDFATIYIRYIPHIKMVESKSLKLYLFSFRNHGDFHEDCVNIIMKDLIALMDPKYIEVFGEFTPRGGIAIHPFANYGKAGTEFETLARKRLFEHDAQ</sequence>
<organism>
    <name type="scientific">Neisseria meningitidis serogroup B (strain ATCC BAA-335 / MC58)</name>
    <dbReference type="NCBI Taxonomy" id="122586"/>
    <lineage>
        <taxon>Bacteria</taxon>
        <taxon>Pseudomonadati</taxon>
        <taxon>Pseudomonadota</taxon>
        <taxon>Betaproteobacteria</taxon>
        <taxon>Neisseriales</taxon>
        <taxon>Neisseriaceae</taxon>
        <taxon>Neisseria</taxon>
    </lineage>
</organism>
<accession>Q9K161</accession>
<feature type="chain" id="PRO_0000162982" description="NADPH-dependent 7-cyano-7-deazaguanine reductase">
    <location>
        <begin position="1"/>
        <end position="157"/>
    </location>
</feature>
<feature type="active site" description="Thioimide intermediate" evidence="1">
    <location>
        <position position="55"/>
    </location>
</feature>
<feature type="active site" description="Proton donor" evidence="1">
    <location>
        <position position="62"/>
    </location>
</feature>
<feature type="binding site" evidence="1">
    <location>
        <begin position="77"/>
        <end position="79"/>
    </location>
    <ligand>
        <name>substrate</name>
    </ligand>
</feature>
<feature type="binding site" evidence="1">
    <location>
        <begin position="96"/>
        <end position="97"/>
    </location>
    <ligand>
        <name>substrate</name>
    </ligand>
</feature>
<proteinExistence type="inferred from homology"/>
<evidence type="ECO:0000255" key="1">
    <source>
        <dbReference type="HAMAP-Rule" id="MF_00818"/>
    </source>
</evidence>